<accession>B4S462</accession>
<evidence type="ECO:0000255" key="1">
    <source>
        <dbReference type="HAMAP-Rule" id="MF_01867"/>
    </source>
</evidence>
<organism>
    <name type="scientific">Prosthecochloris aestuarii (strain DSM 271 / SK 413)</name>
    <dbReference type="NCBI Taxonomy" id="290512"/>
    <lineage>
        <taxon>Bacteria</taxon>
        <taxon>Pseudomonadati</taxon>
        <taxon>Chlorobiota</taxon>
        <taxon>Chlorobiia</taxon>
        <taxon>Chlorobiales</taxon>
        <taxon>Chlorobiaceae</taxon>
        <taxon>Prosthecochloris</taxon>
    </lineage>
</organism>
<name>BSHC_PROA2</name>
<protein>
    <recommendedName>
        <fullName evidence="1">Putative cysteine ligase BshC</fullName>
        <ecNumber evidence="1">6.-.-.-</ecNumber>
    </recommendedName>
</protein>
<dbReference type="EC" id="6.-.-.-" evidence="1"/>
<dbReference type="EMBL" id="CP001108">
    <property type="protein sequence ID" value="ACF46854.1"/>
    <property type="molecule type" value="Genomic_DNA"/>
</dbReference>
<dbReference type="RefSeq" id="WP_012506387.1">
    <property type="nucleotide sequence ID" value="NC_011059.1"/>
</dbReference>
<dbReference type="SMR" id="B4S462"/>
<dbReference type="STRING" id="290512.Paes_1842"/>
<dbReference type="KEGG" id="paa:Paes_1842"/>
<dbReference type="eggNOG" id="COG4365">
    <property type="taxonomic scope" value="Bacteria"/>
</dbReference>
<dbReference type="HOGENOM" id="CLU_022249_1_0_10"/>
<dbReference type="Proteomes" id="UP000002725">
    <property type="component" value="Chromosome"/>
</dbReference>
<dbReference type="GO" id="GO:0016874">
    <property type="term" value="F:ligase activity"/>
    <property type="evidence" value="ECO:0007669"/>
    <property type="project" value="UniProtKB-UniRule"/>
</dbReference>
<dbReference type="HAMAP" id="MF_01867">
    <property type="entry name" value="BshC"/>
    <property type="match status" value="1"/>
</dbReference>
<dbReference type="InterPro" id="IPR011199">
    <property type="entry name" value="Bacillithiol_biosynth_BshC"/>
</dbReference>
<dbReference type="InterPro" id="IPR055399">
    <property type="entry name" value="CC_BshC"/>
</dbReference>
<dbReference type="InterPro" id="IPR055398">
    <property type="entry name" value="Rossmann-like_BshC"/>
</dbReference>
<dbReference type="NCBIfam" id="TIGR03998">
    <property type="entry name" value="thiol_BshC"/>
    <property type="match status" value="1"/>
</dbReference>
<dbReference type="Pfam" id="PF24850">
    <property type="entry name" value="CC_BshC"/>
    <property type="match status" value="1"/>
</dbReference>
<dbReference type="Pfam" id="PF10079">
    <property type="entry name" value="Rossmann-like_BshC"/>
    <property type="match status" value="1"/>
</dbReference>
<dbReference type="PIRSF" id="PIRSF012535">
    <property type="entry name" value="UCP012535"/>
    <property type="match status" value="1"/>
</dbReference>
<proteinExistence type="inferred from homology"/>
<sequence length="563" mass="64797">MNTFLIDYQQIQSPAKGFSKLFVDYASEGEARQELTSNFFHYDYRHEADYYKLLGSLSSKSFAREALRDLLLRQNREYGVAEEHLQLLEKIRSPRCMTIVTGQQPGLFTGPLYTIYKALSAVVIAERQKAMFPDYDFLPIFWIESDDHDFEESACTSLFRGSTRQEIILEPWNRLPGQMVSRSPIGPSIRQCLDTLVESLHESDYREDIITKLNEFYREETTLDGGFARTMAWLFRDYPLFFLSPGDPAFKKLSVEVFFRELSTCPEASHTVIAQSSRLEEKGYSAQAKPRTVNLFYINDHNQRQKIEQVDRDFFALSPGKQRYSRHQILEMCGDHPERFSPNVILRAIVQDHVLPVFAYIGGPGEISYLAQYRRTYEHFGLKMPFIIPRGSFTLIEPVVSRIMDKVMQKSGRPSLSRKHMYQTAFHDMAALQKNAIKGGDNHDYDALFDRTAEALARELLALRPALVQLDPTLEQSLMGTSKQAEKALDTLRQKTQRANRRKHDELLGQIDKSAMHLFPGGVPQERVVNIFYYLNKYGPGLIDELAMVLRAHSTESHIALEL</sequence>
<keyword id="KW-0175">Coiled coil</keyword>
<keyword id="KW-0436">Ligase</keyword>
<comment type="similarity">
    <text evidence="1">Belongs to the BshC family.</text>
</comment>
<reference key="1">
    <citation type="submission" date="2008-06" db="EMBL/GenBank/DDBJ databases">
        <title>Complete sequence of chromosome of Prosthecochloris aestuarii DSM 271.</title>
        <authorList>
            <consortium name="US DOE Joint Genome Institute"/>
            <person name="Lucas S."/>
            <person name="Copeland A."/>
            <person name="Lapidus A."/>
            <person name="Glavina del Rio T."/>
            <person name="Dalin E."/>
            <person name="Tice H."/>
            <person name="Bruce D."/>
            <person name="Goodwin L."/>
            <person name="Pitluck S."/>
            <person name="Schmutz J."/>
            <person name="Larimer F."/>
            <person name="Land M."/>
            <person name="Hauser L."/>
            <person name="Kyrpides N."/>
            <person name="Anderson I."/>
            <person name="Liu Z."/>
            <person name="Li T."/>
            <person name="Zhao F."/>
            <person name="Overmann J."/>
            <person name="Bryant D.A."/>
            <person name="Richardson P."/>
        </authorList>
    </citation>
    <scope>NUCLEOTIDE SEQUENCE [LARGE SCALE GENOMIC DNA]</scope>
    <source>
        <strain>DSM 271 / SK 413</strain>
    </source>
</reference>
<feature type="chain" id="PRO_0000378248" description="Putative cysteine ligase BshC">
    <location>
        <begin position="1"/>
        <end position="563"/>
    </location>
</feature>
<feature type="coiled-coil region" evidence="1">
    <location>
        <begin position="474"/>
        <end position="506"/>
    </location>
</feature>
<gene>
    <name evidence="1" type="primary">bshC</name>
    <name type="ordered locus">Paes_1842</name>
</gene>